<protein>
    <recommendedName>
        <fullName evidence="1">Gamma-glutamyl phosphate reductase</fullName>
        <shortName evidence="1">GPR</shortName>
        <ecNumber evidence="1">1.2.1.41</ecNumber>
    </recommendedName>
    <alternativeName>
        <fullName evidence="1">Glutamate-5-semialdehyde dehydrogenase</fullName>
    </alternativeName>
    <alternativeName>
        <fullName evidence="1">Glutamyl-gamma-semialdehyde dehydrogenase</fullName>
        <shortName evidence="1">GSA dehydrogenase</shortName>
    </alternativeName>
</protein>
<dbReference type="EC" id="1.2.1.41" evidence="1"/>
<dbReference type="EMBL" id="CP000083">
    <property type="protein sequence ID" value="AAZ24662.1"/>
    <property type="molecule type" value="Genomic_DNA"/>
</dbReference>
<dbReference type="RefSeq" id="WP_011045552.1">
    <property type="nucleotide sequence ID" value="NC_003910.7"/>
</dbReference>
<dbReference type="SMR" id="Q47UQ0"/>
<dbReference type="STRING" id="167879.CPS_4833"/>
<dbReference type="KEGG" id="cps:CPS_4833"/>
<dbReference type="eggNOG" id="COG0014">
    <property type="taxonomic scope" value="Bacteria"/>
</dbReference>
<dbReference type="HOGENOM" id="CLU_030231_0_0_6"/>
<dbReference type="UniPathway" id="UPA00098">
    <property type="reaction ID" value="UER00360"/>
</dbReference>
<dbReference type="Proteomes" id="UP000000547">
    <property type="component" value="Chromosome"/>
</dbReference>
<dbReference type="GO" id="GO:0005737">
    <property type="term" value="C:cytoplasm"/>
    <property type="evidence" value="ECO:0007669"/>
    <property type="project" value="UniProtKB-SubCell"/>
</dbReference>
<dbReference type="GO" id="GO:0004350">
    <property type="term" value="F:glutamate-5-semialdehyde dehydrogenase activity"/>
    <property type="evidence" value="ECO:0007669"/>
    <property type="project" value="UniProtKB-UniRule"/>
</dbReference>
<dbReference type="GO" id="GO:0050661">
    <property type="term" value="F:NADP binding"/>
    <property type="evidence" value="ECO:0007669"/>
    <property type="project" value="InterPro"/>
</dbReference>
<dbReference type="GO" id="GO:0055129">
    <property type="term" value="P:L-proline biosynthetic process"/>
    <property type="evidence" value="ECO:0007669"/>
    <property type="project" value="UniProtKB-UniRule"/>
</dbReference>
<dbReference type="CDD" id="cd07079">
    <property type="entry name" value="ALDH_F18-19_ProA-GPR"/>
    <property type="match status" value="1"/>
</dbReference>
<dbReference type="FunFam" id="3.40.309.10:FF:000006">
    <property type="entry name" value="Gamma-glutamyl phosphate reductase"/>
    <property type="match status" value="1"/>
</dbReference>
<dbReference type="Gene3D" id="3.40.605.10">
    <property type="entry name" value="Aldehyde Dehydrogenase, Chain A, domain 1"/>
    <property type="match status" value="1"/>
</dbReference>
<dbReference type="Gene3D" id="3.40.309.10">
    <property type="entry name" value="Aldehyde Dehydrogenase, Chain A, domain 2"/>
    <property type="match status" value="1"/>
</dbReference>
<dbReference type="HAMAP" id="MF_00412">
    <property type="entry name" value="ProA"/>
    <property type="match status" value="1"/>
</dbReference>
<dbReference type="InterPro" id="IPR016161">
    <property type="entry name" value="Ald_DH/histidinol_DH"/>
</dbReference>
<dbReference type="InterPro" id="IPR016163">
    <property type="entry name" value="Ald_DH_C"/>
</dbReference>
<dbReference type="InterPro" id="IPR016162">
    <property type="entry name" value="Ald_DH_N"/>
</dbReference>
<dbReference type="InterPro" id="IPR015590">
    <property type="entry name" value="Aldehyde_DH_dom"/>
</dbReference>
<dbReference type="InterPro" id="IPR020593">
    <property type="entry name" value="G-glutamylP_reductase_CS"/>
</dbReference>
<dbReference type="InterPro" id="IPR012134">
    <property type="entry name" value="Glu-5-SA_DH"/>
</dbReference>
<dbReference type="InterPro" id="IPR000965">
    <property type="entry name" value="GPR_dom"/>
</dbReference>
<dbReference type="NCBIfam" id="NF001221">
    <property type="entry name" value="PRK00197.1"/>
    <property type="match status" value="1"/>
</dbReference>
<dbReference type="NCBIfam" id="TIGR00407">
    <property type="entry name" value="proA"/>
    <property type="match status" value="1"/>
</dbReference>
<dbReference type="PANTHER" id="PTHR11063:SF8">
    <property type="entry name" value="DELTA-1-PYRROLINE-5-CARBOXYLATE SYNTHASE"/>
    <property type="match status" value="1"/>
</dbReference>
<dbReference type="PANTHER" id="PTHR11063">
    <property type="entry name" value="GLUTAMATE SEMIALDEHYDE DEHYDROGENASE"/>
    <property type="match status" value="1"/>
</dbReference>
<dbReference type="Pfam" id="PF00171">
    <property type="entry name" value="Aldedh"/>
    <property type="match status" value="1"/>
</dbReference>
<dbReference type="PIRSF" id="PIRSF000151">
    <property type="entry name" value="GPR"/>
    <property type="match status" value="1"/>
</dbReference>
<dbReference type="SUPFAM" id="SSF53720">
    <property type="entry name" value="ALDH-like"/>
    <property type="match status" value="1"/>
</dbReference>
<dbReference type="PROSITE" id="PS01223">
    <property type="entry name" value="PROA"/>
    <property type="match status" value="1"/>
</dbReference>
<organism>
    <name type="scientific">Colwellia psychrerythraea (strain 34H / ATCC BAA-681)</name>
    <name type="common">Vibrio psychroerythus</name>
    <dbReference type="NCBI Taxonomy" id="167879"/>
    <lineage>
        <taxon>Bacteria</taxon>
        <taxon>Pseudomonadati</taxon>
        <taxon>Pseudomonadota</taxon>
        <taxon>Gammaproteobacteria</taxon>
        <taxon>Alteromonadales</taxon>
        <taxon>Colwelliaceae</taxon>
        <taxon>Colwellia</taxon>
    </lineage>
</organism>
<comment type="function">
    <text evidence="1">Catalyzes the NADPH-dependent reduction of L-glutamate 5-phosphate into L-glutamate 5-semialdehyde and phosphate. The product spontaneously undergoes cyclization to form 1-pyrroline-5-carboxylate.</text>
</comment>
<comment type="catalytic activity">
    <reaction evidence="1">
        <text>L-glutamate 5-semialdehyde + phosphate + NADP(+) = L-glutamyl 5-phosphate + NADPH + H(+)</text>
        <dbReference type="Rhea" id="RHEA:19541"/>
        <dbReference type="ChEBI" id="CHEBI:15378"/>
        <dbReference type="ChEBI" id="CHEBI:43474"/>
        <dbReference type="ChEBI" id="CHEBI:57783"/>
        <dbReference type="ChEBI" id="CHEBI:58066"/>
        <dbReference type="ChEBI" id="CHEBI:58274"/>
        <dbReference type="ChEBI" id="CHEBI:58349"/>
        <dbReference type="EC" id="1.2.1.41"/>
    </reaction>
</comment>
<comment type="pathway">
    <text evidence="1">Amino-acid biosynthesis; L-proline biosynthesis; L-glutamate 5-semialdehyde from L-glutamate: step 2/2.</text>
</comment>
<comment type="subcellular location">
    <subcellularLocation>
        <location evidence="1">Cytoplasm</location>
    </subcellularLocation>
</comment>
<comment type="similarity">
    <text evidence="1">Belongs to the gamma-glutamyl phosphate reductase family.</text>
</comment>
<gene>
    <name evidence="1" type="primary">proA</name>
    <name type="ordered locus">CPS_4833</name>
</gene>
<name>PROA_COLP3</name>
<sequence>MTDFNIATMAQKAKQASRVAAQLNSSEKNALLNDIATAIENNSDAIIQENSKDIAAGREKGLSQAMLDRLVLTDKGIKDMSSAIREIVALTDPVGDVDKLSLRPNGIQVGKMRIPLGVIAMIYEARPNVTAEAAALCIKSGNAVILRGGSEAIHSNLAIAHCLHQVLTTHNVDEHIVCVIPDTSRSVIEQLLQQSDTIDLVIPRGGEGLIRYVSENSRIPVIQHYKGVCHLYIDKYADLDKAVNILVNGKTQKPSACNAFETVLVHSDISAKFLPLAAKALNDAAQVKVHACKNSIGFFPNAELATNEDYQAEYLAQEIAVKVVSSFDTAIGHINEFTSDHTEVIISQDISRSQKFIRQINSSVVMVNASSRFSDGNQLGLGSEIGISTSKLHAYGPMGLEALTTEKFVVFGDGQIRQ</sequence>
<keyword id="KW-0028">Amino-acid biosynthesis</keyword>
<keyword id="KW-0963">Cytoplasm</keyword>
<keyword id="KW-0521">NADP</keyword>
<keyword id="KW-0560">Oxidoreductase</keyword>
<keyword id="KW-0641">Proline biosynthesis</keyword>
<feature type="chain" id="PRO_0000229998" description="Gamma-glutamyl phosphate reductase">
    <location>
        <begin position="1"/>
        <end position="418"/>
    </location>
</feature>
<accession>Q47UQ0</accession>
<evidence type="ECO:0000255" key="1">
    <source>
        <dbReference type="HAMAP-Rule" id="MF_00412"/>
    </source>
</evidence>
<proteinExistence type="inferred from homology"/>
<reference key="1">
    <citation type="journal article" date="2005" name="Proc. Natl. Acad. Sci. U.S.A.">
        <title>The psychrophilic lifestyle as revealed by the genome sequence of Colwellia psychrerythraea 34H through genomic and proteomic analyses.</title>
        <authorList>
            <person name="Methe B.A."/>
            <person name="Nelson K.E."/>
            <person name="Deming J.W."/>
            <person name="Momen B."/>
            <person name="Melamud E."/>
            <person name="Zhang X."/>
            <person name="Moult J."/>
            <person name="Madupu R."/>
            <person name="Nelson W.C."/>
            <person name="Dodson R.J."/>
            <person name="Brinkac L.M."/>
            <person name="Daugherty S.C."/>
            <person name="Durkin A.S."/>
            <person name="DeBoy R.T."/>
            <person name="Kolonay J.F."/>
            <person name="Sullivan S.A."/>
            <person name="Zhou L."/>
            <person name="Davidsen T.M."/>
            <person name="Wu M."/>
            <person name="Huston A.L."/>
            <person name="Lewis M."/>
            <person name="Weaver B."/>
            <person name="Weidman J.F."/>
            <person name="Khouri H."/>
            <person name="Utterback T.R."/>
            <person name="Feldblyum T.V."/>
            <person name="Fraser C.M."/>
        </authorList>
    </citation>
    <scope>NUCLEOTIDE SEQUENCE [LARGE SCALE GENOMIC DNA]</scope>
    <source>
        <strain>34H / ATCC BAA-681</strain>
    </source>
</reference>